<name>PETG_ILLOL</name>
<sequence>MIEVFLFGIVLGLIPITLAGLFVTAYLQYRRGDQLDL</sequence>
<reference key="1">
    <citation type="journal article" date="2007" name="Mol. Phylogenet. Evol.">
        <title>Phylogenetic and evolutionary implications of complete chloroplast genome sequences of four early-diverging angiosperms: Buxus (Buxaceae), Chloranthus (Chloranthaceae), Dioscorea (Dioscoreaceae), and Illicium (Schisandraceae).</title>
        <authorList>
            <person name="Hansen D.R."/>
            <person name="Dastidar S.G."/>
            <person name="Cai Z."/>
            <person name="Penaflor C."/>
            <person name="Kuehl J.V."/>
            <person name="Boore J.L."/>
            <person name="Jansen R.K."/>
        </authorList>
    </citation>
    <scope>NUCLEOTIDE SEQUENCE [LARGE SCALE GENOMIC DNA]</scope>
</reference>
<organism>
    <name type="scientific">Illicium oligandrum</name>
    <name type="common">Star anise</name>
    <dbReference type="NCBI Taxonomy" id="145286"/>
    <lineage>
        <taxon>Eukaryota</taxon>
        <taxon>Viridiplantae</taxon>
        <taxon>Streptophyta</taxon>
        <taxon>Embryophyta</taxon>
        <taxon>Tracheophyta</taxon>
        <taxon>Spermatophyta</taxon>
        <taxon>Magnoliopsida</taxon>
        <taxon>Austrobaileyales</taxon>
        <taxon>Schisandraceae</taxon>
        <taxon>Illicium</taxon>
    </lineage>
</organism>
<dbReference type="EMBL" id="EF380354">
    <property type="protein sequence ID" value="ABQ52538.1"/>
    <property type="molecule type" value="Genomic_DNA"/>
</dbReference>
<dbReference type="RefSeq" id="YP_001294289.1">
    <property type="nucleotide sequence ID" value="NC_009600.1"/>
</dbReference>
<dbReference type="SMR" id="A6MMW3"/>
<dbReference type="GeneID" id="5236780"/>
<dbReference type="GO" id="GO:0009535">
    <property type="term" value="C:chloroplast thylakoid membrane"/>
    <property type="evidence" value="ECO:0007669"/>
    <property type="project" value="UniProtKB-SubCell"/>
</dbReference>
<dbReference type="GO" id="GO:0009512">
    <property type="term" value="C:cytochrome b6f complex"/>
    <property type="evidence" value="ECO:0007669"/>
    <property type="project" value="InterPro"/>
</dbReference>
<dbReference type="GO" id="GO:0045158">
    <property type="term" value="F:electron transporter, transferring electrons within cytochrome b6/f complex of photosystem II activity"/>
    <property type="evidence" value="ECO:0007669"/>
    <property type="project" value="UniProtKB-UniRule"/>
</dbReference>
<dbReference type="GO" id="GO:0017004">
    <property type="term" value="P:cytochrome complex assembly"/>
    <property type="evidence" value="ECO:0007669"/>
    <property type="project" value="UniProtKB-UniRule"/>
</dbReference>
<dbReference type="GO" id="GO:0015979">
    <property type="term" value="P:photosynthesis"/>
    <property type="evidence" value="ECO:0007669"/>
    <property type="project" value="UniProtKB-KW"/>
</dbReference>
<dbReference type="HAMAP" id="MF_00432">
    <property type="entry name" value="Cytb6_f_PetG"/>
    <property type="match status" value="1"/>
</dbReference>
<dbReference type="InterPro" id="IPR003683">
    <property type="entry name" value="Cyt_6/f_cplx_su5"/>
</dbReference>
<dbReference type="InterPro" id="IPR036099">
    <property type="entry name" value="Cyt_6/f_cplx_su5_sf"/>
</dbReference>
<dbReference type="NCBIfam" id="NF001907">
    <property type="entry name" value="PRK00665.1"/>
    <property type="match status" value="1"/>
</dbReference>
<dbReference type="Pfam" id="PF02529">
    <property type="entry name" value="PetG"/>
    <property type="match status" value="1"/>
</dbReference>
<dbReference type="PIRSF" id="PIRSF000034">
    <property type="entry name" value="Cyt_b6-f_V"/>
    <property type="match status" value="1"/>
</dbReference>
<dbReference type="SUPFAM" id="SSF103446">
    <property type="entry name" value="PetG subunit of the cytochrome b6f complex"/>
    <property type="match status" value="1"/>
</dbReference>
<keyword id="KW-0150">Chloroplast</keyword>
<keyword id="KW-0249">Electron transport</keyword>
<keyword id="KW-0472">Membrane</keyword>
<keyword id="KW-0602">Photosynthesis</keyword>
<keyword id="KW-0934">Plastid</keyword>
<keyword id="KW-0793">Thylakoid</keyword>
<keyword id="KW-0812">Transmembrane</keyword>
<keyword id="KW-1133">Transmembrane helix</keyword>
<keyword id="KW-0813">Transport</keyword>
<comment type="function">
    <text evidence="1">Component of the cytochrome b6-f complex, which mediates electron transfer between photosystem II (PSII) and photosystem I (PSI), cyclic electron flow around PSI, and state transitions. PetG is required for either the stability or assembly of the cytochrome b6-f complex.</text>
</comment>
<comment type="subunit">
    <text evidence="1">The 4 large subunits of the cytochrome b6-f complex are cytochrome b6, subunit IV (17 kDa polypeptide, PetD), cytochrome f and the Rieske protein, while the 4 small subunits are PetG, PetL, PetM and PetN. The complex functions as a dimer.</text>
</comment>
<comment type="subcellular location">
    <subcellularLocation>
        <location evidence="1">Plastid</location>
        <location evidence="1">Chloroplast thylakoid membrane</location>
        <topology evidence="1">Single-pass membrane protein</topology>
    </subcellularLocation>
</comment>
<comment type="similarity">
    <text evidence="1">Belongs to the PetG family.</text>
</comment>
<protein>
    <recommendedName>
        <fullName evidence="1">Cytochrome b6-f complex subunit 5</fullName>
    </recommendedName>
    <alternativeName>
        <fullName evidence="1">Cytochrome b6-f complex subunit PetG</fullName>
    </alternativeName>
    <alternativeName>
        <fullName evidence="1">Cytochrome b6-f complex subunit V</fullName>
    </alternativeName>
</protein>
<geneLocation type="chloroplast"/>
<accession>A6MMW3</accession>
<evidence type="ECO:0000255" key="1">
    <source>
        <dbReference type="HAMAP-Rule" id="MF_00432"/>
    </source>
</evidence>
<proteinExistence type="inferred from homology"/>
<gene>
    <name evidence="1" type="primary">petG</name>
</gene>
<feature type="chain" id="PRO_0000355391" description="Cytochrome b6-f complex subunit 5">
    <location>
        <begin position="1"/>
        <end position="37"/>
    </location>
</feature>
<feature type="transmembrane region" description="Helical" evidence="1">
    <location>
        <begin position="5"/>
        <end position="25"/>
    </location>
</feature>